<organism>
    <name type="scientific">Prochlorococcus marinus (strain MIT 9312)</name>
    <dbReference type="NCBI Taxonomy" id="74546"/>
    <lineage>
        <taxon>Bacteria</taxon>
        <taxon>Bacillati</taxon>
        <taxon>Cyanobacteriota</taxon>
        <taxon>Cyanophyceae</taxon>
        <taxon>Synechococcales</taxon>
        <taxon>Prochlorococcaceae</taxon>
        <taxon>Prochlorococcus</taxon>
    </lineage>
</organism>
<proteinExistence type="inferred from homology"/>
<keyword id="KW-0201">Cytochrome c-type biogenesis</keyword>
<keyword id="KW-0472">Membrane</keyword>
<keyword id="KW-0793">Thylakoid</keyword>
<keyword id="KW-0812">Transmembrane</keyword>
<keyword id="KW-1133">Transmembrane helix</keyword>
<evidence type="ECO:0000250" key="1"/>
<evidence type="ECO:0000255" key="2">
    <source>
        <dbReference type="HAMAP-Rule" id="MF_01391"/>
    </source>
</evidence>
<gene>
    <name evidence="2" type="primary">ccsA</name>
    <name type="ordered locus">PMT9312_0773</name>
</gene>
<name>CCSA_PROM9</name>
<reference key="1">
    <citation type="journal article" date="2006" name="Science">
        <title>Genomic islands and the ecology and evolution of Prochlorococcus.</title>
        <authorList>
            <person name="Coleman M.L."/>
            <person name="Sullivan M.B."/>
            <person name="Martiny A.C."/>
            <person name="Steglich C."/>
            <person name="Barry K."/>
            <person name="Delong E.F."/>
            <person name="Chisholm S.W."/>
        </authorList>
    </citation>
    <scope>NUCLEOTIDE SEQUENCE [LARGE SCALE GENOMIC DNA]</scope>
    <source>
        <strain>MIT 9312</strain>
    </source>
</reference>
<protein>
    <recommendedName>
        <fullName evidence="2">Cytochrome c biogenesis protein CcsA</fullName>
    </recommendedName>
</protein>
<accession>Q31BB2</accession>
<sequence length="309" mass="34751">MILDNLFKNLIYDPVSALGILVFYILLVNLPISLGAVFKKKSFFIVKLLTILVNLLITLQLLFRWSISGHFPVSNLYESLYFLAWGISMGQLYIEREYSSPIIPSIAIPIELLTVAFACFVLPDDLKLSSNLVPALRSSWLVMHVSVVMLSYAALIIGSLLSASVLFINRNKPLQIRSSSTGIGGFKFFNNNYLNDLADPVEFSHSEELDTLSYRSILIGFVLLTLGLISGAVWANEAWGTWWSWDPKETWAFITWLFYAAYLHMRISKGWQGRRPALLATSGFLVVIVCYLGVNFLGIGLHSYGWIFG</sequence>
<comment type="function">
    <text evidence="2">Required during biogenesis of c-type cytochromes (cytochrome c6 and cytochrome f) at the step of heme attachment.</text>
</comment>
<comment type="subunit">
    <text evidence="1">May interact with ccs1.</text>
</comment>
<comment type="subcellular location">
    <subcellularLocation>
        <location evidence="2">Cellular thylakoid membrane</location>
        <topology evidence="2">Multi-pass membrane protein</topology>
    </subcellularLocation>
</comment>
<comment type="similarity">
    <text evidence="2">Belongs to the CcmF/CycK/Ccl1/NrfE/CcsA family.</text>
</comment>
<feature type="chain" id="PRO_0000353709" description="Cytochrome c biogenesis protein CcsA">
    <location>
        <begin position="1"/>
        <end position="309"/>
    </location>
</feature>
<feature type="transmembrane region" description="Helical" evidence="2">
    <location>
        <begin position="18"/>
        <end position="38"/>
    </location>
</feature>
<feature type="transmembrane region" description="Helical" evidence="2">
    <location>
        <begin position="43"/>
        <end position="63"/>
    </location>
</feature>
<feature type="transmembrane region" description="Helical" evidence="2">
    <location>
        <begin position="67"/>
        <end position="87"/>
    </location>
</feature>
<feature type="transmembrane region" description="Helical" evidence="2">
    <location>
        <begin position="102"/>
        <end position="122"/>
    </location>
</feature>
<feature type="transmembrane region" description="Helical" evidence="2">
    <location>
        <begin position="148"/>
        <end position="168"/>
    </location>
</feature>
<feature type="transmembrane region" description="Helical" evidence="2">
    <location>
        <begin position="216"/>
        <end position="236"/>
    </location>
</feature>
<feature type="transmembrane region" description="Helical" evidence="2">
    <location>
        <begin position="250"/>
        <end position="267"/>
    </location>
</feature>
<feature type="transmembrane region" description="Helical" evidence="2">
    <location>
        <begin position="279"/>
        <end position="299"/>
    </location>
</feature>
<dbReference type="EMBL" id="CP000111">
    <property type="protein sequence ID" value="ABB49833.1"/>
    <property type="molecule type" value="Genomic_DNA"/>
</dbReference>
<dbReference type="RefSeq" id="WP_011376328.1">
    <property type="nucleotide sequence ID" value="NC_007577.1"/>
</dbReference>
<dbReference type="SMR" id="Q31BB2"/>
<dbReference type="STRING" id="74546.PMT9312_0773"/>
<dbReference type="TCDB" id="9.B.14.3.7">
    <property type="family name" value="the putative heme handling protein (hhp) family"/>
</dbReference>
<dbReference type="KEGG" id="pmi:PMT9312_0773"/>
<dbReference type="eggNOG" id="COG0755">
    <property type="taxonomic scope" value="Bacteria"/>
</dbReference>
<dbReference type="HOGENOM" id="CLU_049710_2_4_3"/>
<dbReference type="OrthoDB" id="9814290at2"/>
<dbReference type="Proteomes" id="UP000002715">
    <property type="component" value="Chromosome"/>
</dbReference>
<dbReference type="GO" id="GO:0031676">
    <property type="term" value="C:plasma membrane-derived thylakoid membrane"/>
    <property type="evidence" value="ECO:0007669"/>
    <property type="project" value="UniProtKB-SubCell"/>
</dbReference>
<dbReference type="GO" id="GO:0020037">
    <property type="term" value="F:heme binding"/>
    <property type="evidence" value="ECO:0007669"/>
    <property type="project" value="InterPro"/>
</dbReference>
<dbReference type="GO" id="GO:0017004">
    <property type="term" value="P:cytochrome complex assembly"/>
    <property type="evidence" value="ECO:0007669"/>
    <property type="project" value="UniProtKB-UniRule"/>
</dbReference>
<dbReference type="HAMAP" id="MF_01391">
    <property type="entry name" value="CytC_CcsA"/>
    <property type="match status" value="1"/>
</dbReference>
<dbReference type="InterPro" id="IPR002541">
    <property type="entry name" value="Cyt_c_assembly"/>
</dbReference>
<dbReference type="InterPro" id="IPR017562">
    <property type="entry name" value="Cyt_c_biogenesis_CcsA"/>
</dbReference>
<dbReference type="InterPro" id="IPR045062">
    <property type="entry name" value="Cyt_c_biogenesis_CcsA/CcmC"/>
</dbReference>
<dbReference type="NCBIfam" id="TIGR03144">
    <property type="entry name" value="cytochr_II_ccsB"/>
    <property type="match status" value="1"/>
</dbReference>
<dbReference type="PANTHER" id="PTHR30071:SF1">
    <property type="entry name" value="CYTOCHROME B_B6 PROTEIN-RELATED"/>
    <property type="match status" value="1"/>
</dbReference>
<dbReference type="PANTHER" id="PTHR30071">
    <property type="entry name" value="HEME EXPORTER PROTEIN C"/>
    <property type="match status" value="1"/>
</dbReference>
<dbReference type="Pfam" id="PF01578">
    <property type="entry name" value="Cytochrom_C_asm"/>
    <property type="match status" value="1"/>
</dbReference>